<accession>A0JMF6</accession>
<organism>
    <name type="scientific">Danio rerio</name>
    <name type="common">Zebrafish</name>
    <name type="synonym">Brachydanio rerio</name>
    <dbReference type="NCBI Taxonomy" id="7955"/>
    <lineage>
        <taxon>Eukaryota</taxon>
        <taxon>Metazoa</taxon>
        <taxon>Chordata</taxon>
        <taxon>Craniata</taxon>
        <taxon>Vertebrata</taxon>
        <taxon>Euteleostomi</taxon>
        <taxon>Actinopterygii</taxon>
        <taxon>Neopterygii</taxon>
        <taxon>Teleostei</taxon>
        <taxon>Ostariophysi</taxon>
        <taxon>Cypriniformes</taxon>
        <taxon>Danionidae</taxon>
        <taxon>Danioninae</taxon>
        <taxon>Danio</taxon>
    </lineage>
</organism>
<proteinExistence type="evidence at transcript level"/>
<keyword id="KW-0175">Coiled coil</keyword>
<keyword id="KW-1185">Reference proteome</keyword>
<gene>
    <name type="primary">mtmr10</name>
    <name type="ORF">zgc:153233</name>
</gene>
<dbReference type="EMBL" id="BC125860">
    <property type="protein sequence ID" value="AAI25861.1"/>
    <property type="molecule type" value="mRNA"/>
</dbReference>
<dbReference type="SMR" id="A0JMF6"/>
<dbReference type="FunCoup" id="A0JMF6">
    <property type="interactions" value="1534"/>
</dbReference>
<dbReference type="STRING" id="7955.ENSDARP00000109082"/>
<dbReference type="PaxDb" id="7955-ENSDARP00000109082"/>
<dbReference type="PeptideAtlas" id="A0JMF6"/>
<dbReference type="AGR" id="ZFIN:ZDB-GENE-061103-52"/>
<dbReference type="ZFIN" id="ZDB-GENE-061103-52">
    <property type="gene designation" value="mtmr10"/>
</dbReference>
<dbReference type="eggNOG" id="KOG1089">
    <property type="taxonomic scope" value="Eukaryota"/>
</dbReference>
<dbReference type="InParanoid" id="A0JMF6"/>
<dbReference type="PhylomeDB" id="A0JMF6"/>
<dbReference type="PRO" id="PR:A0JMF6"/>
<dbReference type="Proteomes" id="UP000000437">
    <property type="component" value="Unplaced"/>
</dbReference>
<dbReference type="GO" id="GO:0005737">
    <property type="term" value="C:cytoplasm"/>
    <property type="evidence" value="ECO:0000318"/>
    <property type="project" value="GO_Central"/>
</dbReference>
<dbReference type="GO" id="GO:0016020">
    <property type="term" value="C:membrane"/>
    <property type="evidence" value="ECO:0000318"/>
    <property type="project" value="GO_Central"/>
</dbReference>
<dbReference type="GO" id="GO:0004438">
    <property type="term" value="F:phosphatidylinositol-3-phosphate phosphatase activity"/>
    <property type="evidence" value="ECO:0000318"/>
    <property type="project" value="GO_Central"/>
</dbReference>
<dbReference type="GO" id="GO:0046856">
    <property type="term" value="P:phosphatidylinositol dephosphorylation"/>
    <property type="evidence" value="ECO:0000318"/>
    <property type="project" value="GO_Central"/>
</dbReference>
<dbReference type="CDD" id="cd13346">
    <property type="entry name" value="PH-GRAM_MTMR10"/>
    <property type="match status" value="1"/>
</dbReference>
<dbReference type="Gene3D" id="2.30.29.30">
    <property type="entry name" value="Pleckstrin-homology domain (PH domain)/Phosphotyrosine-binding domain (PTB)"/>
    <property type="match status" value="1"/>
</dbReference>
<dbReference type="InterPro" id="IPR036004">
    <property type="entry name" value="MTMR10_PH-GRAM"/>
</dbReference>
<dbReference type="InterPro" id="IPR022587">
    <property type="entry name" value="MTMR12-like_C"/>
</dbReference>
<dbReference type="InterPro" id="IPR030564">
    <property type="entry name" value="Myotubularin"/>
</dbReference>
<dbReference type="InterPro" id="IPR010569">
    <property type="entry name" value="Myotubularin-like_Pase_dom"/>
</dbReference>
<dbReference type="InterPro" id="IPR011993">
    <property type="entry name" value="PH-like_dom_sf"/>
</dbReference>
<dbReference type="InterPro" id="IPR029021">
    <property type="entry name" value="Prot-tyrosine_phosphatase-like"/>
</dbReference>
<dbReference type="PANTHER" id="PTHR10807">
    <property type="entry name" value="MYOTUBULARIN-RELATED"/>
    <property type="match status" value="1"/>
</dbReference>
<dbReference type="PANTHER" id="PTHR10807:SF39">
    <property type="entry name" value="MYOTUBULARIN-RELATED PROTEIN 10"/>
    <property type="match status" value="1"/>
</dbReference>
<dbReference type="Pfam" id="PF12578">
    <property type="entry name" value="3-PAP"/>
    <property type="match status" value="1"/>
</dbReference>
<dbReference type="Pfam" id="PF06602">
    <property type="entry name" value="Myotub-related"/>
    <property type="match status" value="2"/>
</dbReference>
<dbReference type="SUPFAM" id="SSF52799">
    <property type="entry name" value="(Phosphotyrosine protein) phosphatases II"/>
    <property type="match status" value="1"/>
</dbReference>
<dbReference type="SUPFAM" id="SSF50729">
    <property type="entry name" value="PH domain-like"/>
    <property type="match status" value="1"/>
</dbReference>
<dbReference type="PROSITE" id="PS51339">
    <property type="entry name" value="PPASE_MYOTUBULARIN"/>
    <property type="match status" value="1"/>
</dbReference>
<comment type="similarity">
    <text evidence="3">Belongs to the protein-tyrosine phosphatase family. Non-receptor class myotubularin subfamily.</text>
</comment>
<comment type="caution">
    <text evidence="3">Although it belongs to the non-receptor class myotubularin subfamily, lacks the conserved active site cysteine residue at position 388 in the dsPTPase catalytic loop, suggesting that it has no phosphatase activity.</text>
</comment>
<reference key="1">
    <citation type="submission" date="2006-10" db="EMBL/GenBank/DDBJ databases">
        <authorList>
            <consortium name="NIH - Zebrafish Gene Collection (ZGC) project"/>
        </authorList>
    </citation>
    <scope>NUCLEOTIDE SEQUENCE [LARGE SCALE MRNA]</scope>
    <source>
        <tissue>Embryo</tissue>
    </source>
</reference>
<feature type="chain" id="PRO_0000284362" description="Myotubularin-related protein 10">
    <location>
        <begin position="1"/>
        <end position="752"/>
    </location>
</feature>
<feature type="domain" description="Myotubularin phosphatase" evidence="2">
    <location>
        <begin position="206"/>
        <end position="636"/>
    </location>
</feature>
<feature type="coiled-coil region" evidence="1">
    <location>
        <begin position="652"/>
        <end position="683"/>
    </location>
</feature>
<evidence type="ECO:0000255" key="1"/>
<evidence type="ECO:0000255" key="2">
    <source>
        <dbReference type="PROSITE-ProRule" id="PRU00669"/>
    </source>
</evidence>
<evidence type="ECO:0000305" key="3"/>
<name>MTMRA_DANRE</name>
<protein>
    <recommendedName>
        <fullName>Myotubularin-related protein 10</fullName>
    </recommendedName>
    <alternativeName>
        <fullName evidence="3">Inactive phosphatidylinositol 3-phosphatase 10</fullName>
    </alternativeName>
</protein>
<sequence>MFSGKQTKPTFKSYLPPLQTDLKKSPQLPIKKLEAKLLPGEIVVNEANFVRKCIGADSGQDDLWGKLVCTNFKVSFISHNSLPQQRFQCTHRLLGEHDIPLACVEQVVTVNDVKGKQKILGSNQKLKFNPTELILYCKDFRIIRFRFDEAGPESAKKVCLAIAHYSHPADPQLLFGFEYVGKRYHGSAGERVNGVDPGGGLQTPLFDCSSDWDREIKRTGASEWRVCTINQGYFISPSLPEFFVVPVSLADQDLKQYACCFYSQRIPLWCWNHPSGSALVRMSNISDPQQQRKVEQRISSAITKSHPLRSDVFKSDLDKNLPNIQDIQAALLKLRQICVIESFEESEEKWLSSLESSRWMEYVRTFLRHAVEVVYMLESRHVSVILLEKEDRDLSCVISSLVQLMCDPHCRSLHGFQALIQKEWVMAGHRFLDRCNHLKKSDKEELWNQYPAAFEFTEVYLTVLGDSMWVPVFSTFLFNCPRQRAEHSRDFASSKSIHLGQDQALRFPPVWDWSQQFSLKDQTLFNNPLYVGKIATCLQNGTVKTFTHRRSKKNYSSTVRGLPSLMRNGSLGPNDTLTRRNSLVLRLRSDLSQVREQPETPSERFVRDFFSRAVDLQGLLLPQLLPSHLSVWKLYFLRWVPEAQIPHGGPVTAFHKLSVLTDEIEMLQNQLRQYKGAAGTANTSHAEHSKMYFKATSTPQQCPAPPGYLSSSFPFSPVGNLCRPGILGTPLSKFLNGAKIWLSTETLANETI</sequence>